<sequence>MGPSGAGTRGGQAQFQWEEVRNDKQKGRYLGQSIYAASGRWAEGKDLEWWSKGRTTQSAINSENSDKEKYKKEILEIKEREQRMLAEALGLPQPSALALTSSKAANRSSTNTEKDSRSIAHSTSRSRSTSPANRHRRKEKERTRSNHRHGSHRRHEPYRTHLSRHHRHSTTNYHSKRDDRYERRREHSPNDGGS</sequence>
<organism>
    <name type="scientific">Schizosaccharomyces pombe (strain 972 / ATCC 24843)</name>
    <name type="common">Fission yeast</name>
    <dbReference type="NCBI Taxonomy" id="284812"/>
    <lineage>
        <taxon>Eukaryota</taxon>
        <taxon>Fungi</taxon>
        <taxon>Dikarya</taxon>
        <taxon>Ascomycota</taxon>
        <taxon>Taphrinomycotina</taxon>
        <taxon>Schizosaccharomycetes</taxon>
        <taxon>Schizosaccharomycetales</taxon>
        <taxon>Schizosaccharomycetaceae</taxon>
        <taxon>Schizosaccharomyces</taxon>
    </lineage>
</organism>
<accession>O14256</accession>
<gene>
    <name type="ORF">SPAC6G10.10c</name>
</gene>
<feature type="chain" id="PRO_0000116703" description="Uncharacterized protein C6G10.10c">
    <location>
        <begin position="1"/>
        <end position="194"/>
    </location>
</feature>
<feature type="region of interest" description="Disordered" evidence="1">
    <location>
        <begin position="52"/>
        <end position="71"/>
    </location>
</feature>
<feature type="region of interest" description="Disordered" evidence="1">
    <location>
        <begin position="86"/>
        <end position="194"/>
    </location>
</feature>
<feature type="compositionally biased region" description="Polar residues" evidence="1">
    <location>
        <begin position="53"/>
        <end position="63"/>
    </location>
</feature>
<feature type="compositionally biased region" description="Polar residues" evidence="1">
    <location>
        <begin position="98"/>
        <end position="111"/>
    </location>
</feature>
<feature type="compositionally biased region" description="Polar residues" evidence="1">
    <location>
        <begin position="119"/>
        <end position="132"/>
    </location>
</feature>
<feature type="compositionally biased region" description="Basic residues" evidence="1">
    <location>
        <begin position="133"/>
        <end position="169"/>
    </location>
</feature>
<feature type="compositionally biased region" description="Basic and acidic residues" evidence="1">
    <location>
        <begin position="175"/>
        <end position="194"/>
    </location>
</feature>
<protein>
    <recommendedName>
        <fullName>Uncharacterized protein C6G10.10c</fullName>
    </recommendedName>
</protein>
<evidence type="ECO:0000256" key="1">
    <source>
        <dbReference type="SAM" id="MobiDB-lite"/>
    </source>
</evidence>
<proteinExistence type="predicted"/>
<keyword id="KW-1185">Reference proteome</keyword>
<reference key="1">
    <citation type="journal article" date="2002" name="Nature">
        <title>The genome sequence of Schizosaccharomyces pombe.</title>
        <authorList>
            <person name="Wood V."/>
            <person name="Gwilliam R."/>
            <person name="Rajandream M.A."/>
            <person name="Lyne M.H."/>
            <person name="Lyne R."/>
            <person name="Stewart A."/>
            <person name="Sgouros J.G."/>
            <person name="Peat N."/>
            <person name="Hayles J."/>
            <person name="Baker S.G."/>
            <person name="Basham D."/>
            <person name="Bowman S."/>
            <person name="Brooks K."/>
            <person name="Brown D."/>
            <person name="Brown S."/>
            <person name="Chillingworth T."/>
            <person name="Churcher C.M."/>
            <person name="Collins M."/>
            <person name="Connor R."/>
            <person name="Cronin A."/>
            <person name="Davis P."/>
            <person name="Feltwell T."/>
            <person name="Fraser A."/>
            <person name="Gentles S."/>
            <person name="Goble A."/>
            <person name="Hamlin N."/>
            <person name="Harris D.E."/>
            <person name="Hidalgo J."/>
            <person name="Hodgson G."/>
            <person name="Holroyd S."/>
            <person name="Hornsby T."/>
            <person name="Howarth S."/>
            <person name="Huckle E.J."/>
            <person name="Hunt S."/>
            <person name="Jagels K."/>
            <person name="James K.D."/>
            <person name="Jones L."/>
            <person name="Jones M."/>
            <person name="Leather S."/>
            <person name="McDonald S."/>
            <person name="McLean J."/>
            <person name="Mooney P."/>
            <person name="Moule S."/>
            <person name="Mungall K.L."/>
            <person name="Murphy L.D."/>
            <person name="Niblett D."/>
            <person name="Odell C."/>
            <person name="Oliver K."/>
            <person name="O'Neil S."/>
            <person name="Pearson D."/>
            <person name="Quail M.A."/>
            <person name="Rabbinowitsch E."/>
            <person name="Rutherford K.M."/>
            <person name="Rutter S."/>
            <person name="Saunders D."/>
            <person name="Seeger K."/>
            <person name="Sharp S."/>
            <person name="Skelton J."/>
            <person name="Simmonds M.N."/>
            <person name="Squares R."/>
            <person name="Squares S."/>
            <person name="Stevens K."/>
            <person name="Taylor K."/>
            <person name="Taylor R.G."/>
            <person name="Tivey A."/>
            <person name="Walsh S.V."/>
            <person name="Warren T."/>
            <person name="Whitehead S."/>
            <person name="Woodward J.R."/>
            <person name="Volckaert G."/>
            <person name="Aert R."/>
            <person name="Robben J."/>
            <person name="Grymonprez B."/>
            <person name="Weltjens I."/>
            <person name="Vanstreels E."/>
            <person name="Rieger M."/>
            <person name="Schaefer M."/>
            <person name="Mueller-Auer S."/>
            <person name="Gabel C."/>
            <person name="Fuchs M."/>
            <person name="Duesterhoeft A."/>
            <person name="Fritzc C."/>
            <person name="Holzer E."/>
            <person name="Moestl D."/>
            <person name="Hilbert H."/>
            <person name="Borzym K."/>
            <person name="Langer I."/>
            <person name="Beck A."/>
            <person name="Lehrach H."/>
            <person name="Reinhardt R."/>
            <person name="Pohl T.M."/>
            <person name="Eger P."/>
            <person name="Zimmermann W."/>
            <person name="Wedler H."/>
            <person name="Wambutt R."/>
            <person name="Purnelle B."/>
            <person name="Goffeau A."/>
            <person name="Cadieu E."/>
            <person name="Dreano S."/>
            <person name="Gloux S."/>
            <person name="Lelaure V."/>
            <person name="Mottier S."/>
            <person name="Galibert F."/>
            <person name="Aves S.J."/>
            <person name="Xiang Z."/>
            <person name="Hunt C."/>
            <person name="Moore K."/>
            <person name="Hurst S.M."/>
            <person name="Lucas M."/>
            <person name="Rochet M."/>
            <person name="Gaillardin C."/>
            <person name="Tallada V.A."/>
            <person name="Garzon A."/>
            <person name="Thode G."/>
            <person name="Daga R.R."/>
            <person name="Cruzado L."/>
            <person name="Jimenez J."/>
            <person name="Sanchez M."/>
            <person name="del Rey F."/>
            <person name="Benito J."/>
            <person name="Dominguez A."/>
            <person name="Revuelta J.L."/>
            <person name="Moreno S."/>
            <person name="Armstrong J."/>
            <person name="Forsburg S.L."/>
            <person name="Cerutti L."/>
            <person name="Lowe T."/>
            <person name="McCombie W.R."/>
            <person name="Paulsen I."/>
            <person name="Potashkin J."/>
            <person name="Shpakovski G.V."/>
            <person name="Ussery D."/>
            <person name="Barrell B.G."/>
            <person name="Nurse P."/>
        </authorList>
    </citation>
    <scope>NUCLEOTIDE SEQUENCE [LARGE SCALE GENOMIC DNA]</scope>
    <source>
        <strain>972 / ATCC 24843</strain>
    </source>
</reference>
<name>YE6A_SCHPO</name>
<dbReference type="EMBL" id="CU329670">
    <property type="protein sequence ID" value="CAB11296.1"/>
    <property type="molecule type" value="Genomic_DNA"/>
</dbReference>
<dbReference type="PIR" id="T39060">
    <property type="entry name" value="T39060"/>
</dbReference>
<dbReference type="RefSeq" id="NP_594107.1">
    <property type="nucleotide sequence ID" value="NM_001019531.2"/>
</dbReference>
<dbReference type="SMR" id="O14256"/>
<dbReference type="BioGRID" id="277960">
    <property type="interactions" value="15"/>
</dbReference>
<dbReference type="STRING" id="284812.O14256"/>
<dbReference type="iPTMnet" id="O14256"/>
<dbReference type="PaxDb" id="4896-SPAC6G10.10c.1"/>
<dbReference type="EnsemblFungi" id="SPAC6G10.10c.1">
    <property type="protein sequence ID" value="SPAC6G10.10c.1:pep"/>
    <property type="gene ID" value="SPAC6G10.10c"/>
</dbReference>
<dbReference type="KEGG" id="spo:2541457"/>
<dbReference type="PomBase" id="SPAC6G10.10c"/>
<dbReference type="VEuPathDB" id="FungiDB:SPAC6G10.10c"/>
<dbReference type="eggNOG" id="KOG4520">
    <property type="taxonomic scope" value="Eukaryota"/>
</dbReference>
<dbReference type="HOGENOM" id="CLU_1235675_0_0_1"/>
<dbReference type="InParanoid" id="O14256"/>
<dbReference type="OMA" id="DLEWWSK"/>
<dbReference type="PhylomeDB" id="O14256"/>
<dbReference type="Reactome" id="R-SPO-6798695">
    <property type="pathway name" value="Neutrophil degranulation"/>
</dbReference>
<dbReference type="PRO" id="PR:O14256"/>
<dbReference type="Proteomes" id="UP000002485">
    <property type="component" value="Chromosome I"/>
</dbReference>
<dbReference type="GO" id="GO:0005634">
    <property type="term" value="C:nucleus"/>
    <property type="evidence" value="ECO:0007005"/>
    <property type="project" value="PomBase"/>
</dbReference>
<dbReference type="InterPro" id="IPR019315">
    <property type="entry name" value="MMTA2_N"/>
</dbReference>
<dbReference type="InterPro" id="IPR039207">
    <property type="entry name" value="MMTAG2-like"/>
</dbReference>
<dbReference type="PANTHER" id="PTHR14580:SF0">
    <property type="entry name" value="MULTIPLE MYELOMA TUMOR-ASSOCIATED PROTEIN 2"/>
    <property type="match status" value="1"/>
</dbReference>
<dbReference type="PANTHER" id="PTHR14580">
    <property type="entry name" value="MULTIPLE MYELOMA TUMOR-ASSOCIATED PROTEIN 2 FAMILY MEMBER"/>
    <property type="match status" value="1"/>
</dbReference>
<dbReference type="Pfam" id="PF10159">
    <property type="entry name" value="MMtag"/>
    <property type="match status" value="1"/>
</dbReference>